<gene>
    <name evidence="1" type="primary">bioD</name>
    <name type="ordered locus">Bmul_0372</name>
    <name type="ordered locus">BMULJ_02882</name>
</gene>
<organism>
    <name type="scientific">Burkholderia multivorans (strain ATCC 17616 / 249)</name>
    <dbReference type="NCBI Taxonomy" id="395019"/>
    <lineage>
        <taxon>Bacteria</taxon>
        <taxon>Pseudomonadati</taxon>
        <taxon>Pseudomonadota</taxon>
        <taxon>Betaproteobacteria</taxon>
        <taxon>Burkholderiales</taxon>
        <taxon>Burkholderiaceae</taxon>
        <taxon>Burkholderia</taxon>
        <taxon>Burkholderia cepacia complex</taxon>
    </lineage>
</organism>
<keyword id="KW-0067">ATP-binding</keyword>
<keyword id="KW-0093">Biotin biosynthesis</keyword>
<keyword id="KW-0963">Cytoplasm</keyword>
<keyword id="KW-0436">Ligase</keyword>
<keyword id="KW-0460">Magnesium</keyword>
<keyword id="KW-0479">Metal-binding</keyword>
<keyword id="KW-0547">Nucleotide-binding</keyword>
<keyword id="KW-1185">Reference proteome</keyword>
<reference key="1">
    <citation type="submission" date="2007-10" db="EMBL/GenBank/DDBJ databases">
        <title>Complete sequence of chromosome 1 of Burkholderia multivorans ATCC 17616.</title>
        <authorList>
            <person name="Copeland A."/>
            <person name="Lucas S."/>
            <person name="Lapidus A."/>
            <person name="Barry K."/>
            <person name="Glavina del Rio T."/>
            <person name="Dalin E."/>
            <person name="Tice H."/>
            <person name="Pitluck S."/>
            <person name="Chain P."/>
            <person name="Malfatti S."/>
            <person name="Shin M."/>
            <person name="Vergez L."/>
            <person name="Schmutz J."/>
            <person name="Larimer F."/>
            <person name="Land M."/>
            <person name="Hauser L."/>
            <person name="Kyrpides N."/>
            <person name="Kim E."/>
            <person name="Tiedje J."/>
            <person name="Richardson P."/>
        </authorList>
    </citation>
    <scope>NUCLEOTIDE SEQUENCE [LARGE SCALE GENOMIC DNA]</scope>
    <source>
        <strain>ATCC 17616 / 249</strain>
    </source>
</reference>
<reference key="2">
    <citation type="submission" date="2007-04" db="EMBL/GenBank/DDBJ databases">
        <title>Complete genome sequence of Burkholderia multivorans ATCC 17616.</title>
        <authorList>
            <person name="Ohtsubo Y."/>
            <person name="Yamashita A."/>
            <person name="Kurokawa K."/>
            <person name="Takami H."/>
            <person name="Yuhara S."/>
            <person name="Nishiyama E."/>
            <person name="Endo R."/>
            <person name="Miyazaki R."/>
            <person name="Ono A."/>
            <person name="Yano K."/>
            <person name="Ito M."/>
            <person name="Sota M."/>
            <person name="Yuji N."/>
            <person name="Hattori M."/>
            <person name="Tsuda M."/>
        </authorList>
    </citation>
    <scope>NUCLEOTIDE SEQUENCE [LARGE SCALE GENOMIC DNA]</scope>
    <source>
        <strain>ATCC 17616 / 249</strain>
    </source>
</reference>
<name>BIOD_BURM1</name>
<accession>A9AE45</accession>
<feature type="chain" id="PRO_1000119863" description="ATP-dependent dethiobiotin synthetase BioD">
    <location>
        <begin position="1"/>
        <end position="239"/>
    </location>
</feature>
<feature type="active site" evidence="1">
    <location>
        <position position="40"/>
    </location>
</feature>
<feature type="binding site" evidence="1">
    <location>
        <begin position="15"/>
        <end position="20"/>
    </location>
    <ligand>
        <name>ATP</name>
        <dbReference type="ChEBI" id="CHEBI:30616"/>
    </ligand>
</feature>
<feature type="binding site" evidence="1">
    <location>
        <position position="19"/>
    </location>
    <ligand>
        <name>Mg(2+)</name>
        <dbReference type="ChEBI" id="CHEBI:18420"/>
    </ligand>
</feature>
<feature type="binding site" evidence="1">
    <location>
        <position position="57"/>
    </location>
    <ligand>
        <name>ATP</name>
        <dbReference type="ChEBI" id="CHEBI:30616"/>
    </ligand>
</feature>
<feature type="binding site" evidence="1">
    <location>
        <position position="57"/>
    </location>
    <ligand>
        <name>Mg(2+)</name>
        <dbReference type="ChEBI" id="CHEBI:18420"/>
    </ligand>
</feature>
<feature type="binding site" evidence="1">
    <location>
        <begin position="118"/>
        <end position="121"/>
    </location>
    <ligand>
        <name>ATP</name>
        <dbReference type="ChEBI" id="CHEBI:30616"/>
    </ligand>
</feature>
<feature type="binding site" evidence="1">
    <location>
        <position position="118"/>
    </location>
    <ligand>
        <name>Mg(2+)</name>
        <dbReference type="ChEBI" id="CHEBI:18420"/>
    </ligand>
</feature>
<feature type="binding site" evidence="1">
    <location>
        <begin position="178"/>
        <end position="179"/>
    </location>
    <ligand>
        <name>ATP</name>
        <dbReference type="ChEBI" id="CHEBI:30616"/>
    </ligand>
</feature>
<sequence length="239" mass="25155">MSTPLSLFVTGTDTEIGKTFVSAALLHGFARHGLRAAAMKPVAAGAYERDGVWRNEDADQLDAAASVVLPPELRTPFLLKAPAAPHIVAAHEHVTLDIDTIVACHRDALTRADIVVVEGVGGFRVPLNDTQDTADLAVALGLPVVLVVGMRLGCISHALLTADAIAARGLTLAGWVANHVDPAMTYADENVATIRDWLAREHRAPLLGRIAHMAPADPESAAATLDIAALVDTLRAAQR</sequence>
<dbReference type="EC" id="6.3.3.3" evidence="1"/>
<dbReference type="EMBL" id="CP000868">
    <property type="protein sequence ID" value="ABX14067.1"/>
    <property type="molecule type" value="Genomic_DNA"/>
</dbReference>
<dbReference type="EMBL" id="AP009385">
    <property type="protein sequence ID" value="BAG44770.1"/>
    <property type="molecule type" value="Genomic_DNA"/>
</dbReference>
<dbReference type="RefSeq" id="WP_006398099.1">
    <property type="nucleotide sequence ID" value="NC_010804.1"/>
</dbReference>
<dbReference type="SMR" id="A9AE45"/>
<dbReference type="STRING" id="395019.BMULJ_02882"/>
<dbReference type="KEGG" id="bmj:BMULJ_02882"/>
<dbReference type="KEGG" id="bmu:Bmul_0372"/>
<dbReference type="eggNOG" id="COG0132">
    <property type="taxonomic scope" value="Bacteria"/>
</dbReference>
<dbReference type="HOGENOM" id="CLU_072551_0_0_4"/>
<dbReference type="UniPathway" id="UPA00078">
    <property type="reaction ID" value="UER00161"/>
</dbReference>
<dbReference type="Proteomes" id="UP000008815">
    <property type="component" value="Chromosome 1"/>
</dbReference>
<dbReference type="GO" id="GO:0005829">
    <property type="term" value="C:cytosol"/>
    <property type="evidence" value="ECO:0007669"/>
    <property type="project" value="TreeGrafter"/>
</dbReference>
<dbReference type="GO" id="GO:0005524">
    <property type="term" value="F:ATP binding"/>
    <property type="evidence" value="ECO:0007669"/>
    <property type="project" value="UniProtKB-UniRule"/>
</dbReference>
<dbReference type="GO" id="GO:0004141">
    <property type="term" value="F:dethiobiotin synthase activity"/>
    <property type="evidence" value="ECO:0007669"/>
    <property type="project" value="UniProtKB-UniRule"/>
</dbReference>
<dbReference type="GO" id="GO:0000287">
    <property type="term" value="F:magnesium ion binding"/>
    <property type="evidence" value="ECO:0007669"/>
    <property type="project" value="UniProtKB-UniRule"/>
</dbReference>
<dbReference type="GO" id="GO:0009102">
    <property type="term" value="P:biotin biosynthetic process"/>
    <property type="evidence" value="ECO:0007669"/>
    <property type="project" value="UniProtKB-UniRule"/>
</dbReference>
<dbReference type="CDD" id="cd03109">
    <property type="entry name" value="DTBS"/>
    <property type="match status" value="1"/>
</dbReference>
<dbReference type="FunFam" id="3.40.50.300:FF:000292">
    <property type="entry name" value="ATP-dependent dethiobiotin synthetase BioD"/>
    <property type="match status" value="1"/>
</dbReference>
<dbReference type="Gene3D" id="3.40.50.300">
    <property type="entry name" value="P-loop containing nucleotide triphosphate hydrolases"/>
    <property type="match status" value="1"/>
</dbReference>
<dbReference type="HAMAP" id="MF_00336">
    <property type="entry name" value="BioD"/>
    <property type="match status" value="1"/>
</dbReference>
<dbReference type="InterPro" id="IPR004472">
    <property type="entry name" value="DTB_synth_BioD"/>
</dbReference>
<dbReference type="InterPro" id="IPR027417">
    <property type="entry name" value="P-loop_NTPase"/>
</dbReference>
<dbReference type="NCBIfam" id="TIGR00347">
    <property type="entry name" value="bioD"/>
    <property type="match status" value="1"/>
</dbReference>
<dbReference type="PANTHER" id="PTHR43210">
    <property type="entry name" value="DETHIOBIOTIN SYNTHETASE"/>
    <property type="match status" value="1"/>
</dbReference>
<dbReference type="PANTHER" id="PTHR43210:SF5">
    <property type="entry name" value="DETHIOBIOTIN SYNTHETASE"/>
    <property type="match status" value="1"/>
</dbReference>
<dbReference type="Pfam" id="PF13500">
    <property type="entry name" value="AAA_26"/>
    <property type="match status" value="1"/>
</dbReference>
<dbReference type="PIRSF" id="PIRSF006755">
    <property type="entry name" value="DTB_synth"/>
    <property type="match status" value="1"/>
</dbReference>
<dbReference type="SUPFAM" id="SSF52540">
    <property type="entry name" value="P-loop containing nucleoside triphosphate hydrolases"/>
    <property type="match status" value="1"/>
</dbReference>
<comment type="function">
    <text evidence="1">Catalyzes a mechanistically unusual reaction, the ATP-dependent insertion of CO2 between the N7 and N8 nitrogen atoms of 7,8-diaminopelargonic acid (DAPA, also called 7,8-diammoniononanoate) to form a ureido ring.</text>
</comment>
<comment type="catalytic activity">
    <reaction evidence="1">
        <text>(7R,8S)-7,8-diammoniononanoate + CO2 + ATP = (4R,5S)-dethiobiotin + ADP + phosphate + 3 H(+)</text>
        <dbReference type="Rhea" id="RHEA:15805"/>
        <dbReference type="ChEBI" id="CHEBI:15378"/>
        <dbReference type="ChEBI" id="CHEBI:16526"/>
        <dbReference type="ChEBI" id="CHEBI:30616"/>
        <dbReference type="ChEBI" id="CHEBI:43474"/>
        <dbReference type="ChEBI" id="CHEBI:149469"/>
        <dbReference type="ChEBI" id="CHEBI:149473"/>
        <dbReference type="ChEBI" id="CHEBI:456216"/>
        <dbReference type="EC" id="6.3.3.3"/>
    </reaction>
</comment>
<comment type="cofactor">
    <cofactor evidence="1">
        <name>Mg(2+)</name>
        <dbReference type="ChEBI" id="CHEBI:18420"/>
    </cofactor>
</comment>
<comment type="pathway">
    <text evidence="1">Cofactor biosynthesis; biotin biosynthesis; biotin from 7,8-diaminononanoate: step 1/2.</text>
</comment>
<comment type="subunit">
    <text evidence="1">Homodimer.</text>
</comment>
<comment type="subcellular location">
    <subcellularLocation>
        <location evidence="1">Cytoplasm</location>
    </subcellularLocation>
</comment>
<comment type="similarity">
    <text evidence="1">Belongs to the dethiobiotin synthetase family.</text>
</comment>
<protein>
    <recommendedName>
        <fullName evidence="1">ATP-dependent dethiobiotin synthetase BioD</fullName>
        <ecNumber evidence="1">6.3.3.3</ecNumber>
    </recommendedName>
    <alternativeName>
        <fullName evidence="1">DTB synthetase</fullName>
        <shortName evidence="1">DTBS</shortName>
    </alternativeName>
    <alternativeName>
        <fullName evidence="1">Dethiobiotin synthase</fullName>
    </alternativeName>
</protein>
<evidence type="ECO:0000255" key="1">
    <source>
        <dbReference type="HAMAP-Rule" id="MF_00336"/>
    </source>
</evidence>
<proteinExistence type="inferred from homology"/>